<keyword id="KW-0012">Acyltransferase</keyword>
<keyword id="KW-0028">Amino-acid biosynthesis</keyword>
<keyword id="KW-0055">Arginine biosynthesis</keyword>
<keyword id="KW-0068">Autocatalytic cleavage</keyword>
<keyword id="KW-0963">Cytoplasm</keyword>
<keyword id="KW-0511">Multifunctional enzyme</keyword>
<keyword id="KW-1185">Reference proteome</keyword>
<keyword id="KW-0808">Transferase</keyword>
<sequence length="393" mass="40986">MNVKGFRFSAVEAAIKKPGRLDLALICSDAPAAVAAVYTTNKVKAAPVLLDMERTTSGTCRAVVVNSGNANACTGDRGMEDARETTSLVAERIGASEHEVLVCSTGVIGVPLPMERIRGGIPSLVAGLGSATLDQIAAAIMTTDTFPKLEARTGTAGGVGYTIAGIAKGAGMIMPNMATMLAFVVTDAAVDPQWLDRVFRRANDTSFNAITVDGDMSTNDTAIIMANGAAGNPVLSEGSEGAAEFAVLLEEVLLSLAKLIVKDGEGATKFVEVTVKGARSDADAKRAAMAVANSCLVKTAFFGQDANWGRIFAAVGYSGADVEPDRAELFFDDVRMVQGGVFAGGDAEARGTGVLRKKEFTVTVDLHLGDGRATVYTSDLSYDYVKINADYRT</sequence>
<proteinExistence type="inferred from homology"/>
<gene>
    <name evidence="1" type="primary">argJ</name>
    <name type="ordered locus">GSU2049</name>
</gene>
<comment type="function">
    <text evidence="1">Catalyzes two activities which are involved in the cyclic version of arginine biosynthesis: the synthesis of N-acetylglutamate from glutamate and acetyl-CoA as the acetyl donor, and of ornithine by transacetylation between N(2)-acetylornithine and glutamate.</text>
</comment>
<comment type="catalytic activity">
    <reaction evidence="1">
        <text>N(2)-acetyl-L-ornithine + L-glutamate = N-acetyl-L-glutamate + L-ornithine</text>
        <dbReference type="Rhea" id="RHEA:15349"/>
        <dbReference type="ChEBI" id="CHEBI:29985"/>
        <dbReference type="ChEBI" id="CHEBI:44337"/>
        <dbReference type="ChEBI" id="CHEBI:46911"/>
        <dbReference type="ChEBI" id="CHEBI:57805"/>
        <dbReference type="EC" id="2.3.1.35"/>
    </reaction>
</comment>
<comment type="catalytic activity">
    <reaction evidence="1">
        <text>L-glutamate + acetyl-CoA = N-acetyl-L-glutamate + CoA + H(+)</text>
        <dbReference type="Rhea" id="RHEA:24292"/>
        <dbReference type="ChEBI" id="CHEBI:15378"/>
        <dbReference type="ChEBI" id="CHEBI:29985"/>
        <dbReference type="ChEBI" id="CHEBI:44337"/>
        <dbReference type="ChEBI" id="CHEBI:57287"/>
        <dbReference type="ChEBI" id="CHEBI:57288"/>
        <dbReference type="EC" id="2.3.1.1"/>
    </reaction>
</comment>
<comment type="pathway">
    <text evidence="1">Amino-acid biosynthesis; L-arginine biosynthesis; L-ornithine and N-acetyl-L-glutamate from L-glutamate and N(2)-acetyl-L-ornithine (cyclic): step 1/1.</text>
</comment>
<comment type="pathway">
    <text evidence="1">Amino-acid biosynthesis; L-arginine biosynthesis; N(2)-acetyl-L-ornithine from L-glutamate: step 1/4.</text>
</comment>
<comment type="subunit">
    <text evidence="1">Heterotetramer of two alpha and two beta chains.</text>
</comment>
<comment type="subcellular location">
    <subcellularLocation>
        <location evidence="1">Cytoplasm</location>
    </subcellularLocation>
</comment>
<comment type="similarity">
    <text evidence="1">Belongs to the ArgJ family.</text>
</comment>
<accession>P62061</accession>
<feature type="chain" id="PRO_0000002169" description="Arginine biosynthesis bifunctional protein ArgJ alpha chain" evidence="1">
    <location>
        <begin position="1"/>
        <end position="178"/>
    </location>
</feature>
<feature type="chain" id="PRO_0000002170" description="Arginine biosynthesis bifunctional protein ArgJ beta chain" evidence="1">
    <location>
        <begin position="179"/>
        <end position="393"/>
    </location>
</feature>
<feature type="active site" description="Nucleophile" evidence="1">
    <location>
        <position position="179"/>
    </location>
</feature>
<feature type="binding site" evidence="1">
    <location>
        <position position="142"/>
    </location>
    <ligand>
        <name>substrate</name>
    </ligand>
</feature>
<feature type="binding site" evidence="1">
    <location>
        <position position="168"/>
    </location>
    <ligand>
        <name>substrate</name>
    </ligand>
</feature>
<feature type="binding site" evidence="1">
    <location>
        <position position="179"/>
    </location>
    <ligand>
        <name>substrate</name>
    </ligand>
</feature>
<feature type="binding site" evidence="1">
    <location>
        <position position="265"/>
    </location>
    <ligand>
        <name>substrate</name>
    </ligand>
</feature>
<feature type="binding site" evidence="1">
    <location>
        <position position="388"/>
    </location>
    <ligand>
        <name>substrate</name>
    </ligand>
</feature>
<feature type="binding site" evidence="1">
    <location>
        <position position="393"/>
    </location>
    <ligand>
        <name>substrate</name>
    </ligand>
</feature>
<feature type="site" description="Involved in the stabilization of negative charge on the oxyanion by the formation of the oxyanion hole" evidence="1">
    <location>
        <position position="105"/>
    </location>
</feature>
<feature type="site" description="Involved in the stabilization of negative charge on the oxyanion by the formation of the oxyanion hole" evidence="1">
    <location>
        <position position="106"/>
    </location>
</feature>
<feature type="site" description="Cleavage; by autolysis" evidence="1">
    <location>
        <begin position="178"/>
        <end position="179"/>
    </location>
</feature>
<dbReference type="EC" id="2.3.1.35" evidence="1"/>
<dbReference type="EC" id="2.3.1.1" evidence="1"/>
<dbReference type="EMBL" id="AE017180">
    <property type="protein sequence ID" value="AAR35425.1"/>
    <property type="molecule type" value="Genomic_DNA"/>
</dbReference>
<dbReference type="RefSeq" id="NP_953098.1">
    <property type="nucleotide sequence ID" value="NC_002939.5"/>
</dbReference>
<dbReference type="RefSeq" id="WP_010942692.1">
    <property type="nucleotide sequence ID" value="NC_002939.5"/>
</dbReference>
<dbReference type="SMR" id="P62061"/>
<dbReference type="STRING" id="243231.GSU2049"/>
<dbReference type="MEROPS" id="T05.002"/>
<dbReference type="EnsemblBacteria" id="AAR35425">
    <property type="protein sequence ID" value="AAR35425"/>
    <property type="gene ID" value="GSU2049"/>
</dbReference>
<dbReference type="KEGG" id="gsu:GSU2049"/>
<dbReference type="PATRIC" id="fig|243231.5.peg.2085"/>
<dbReference type="eggNOG" id="COG1364">
    <property type="taxonomic scope" value="Bacteria"/>
</dbReference>
<dbReference type="HOGENOM" id="CLU_027172_1_0_7"/>
<dbReference type="InParanoid" id="P62061"/>
<dbReference type="OrthoDB" id="9804242at2"/>
<dbReference type="UniPathway" id="UPA00068">
    <property type="reaction ID" value="UER00106"/>
</dbReference>
<dbReference type="UniPathway" id="UPA00068">
    <property type="reaction ID" value="UER00111"/>
</dbReference>
<dbReference type="Proteomes" id="UP000000577">
    <property type="component" value="Chromosome"/>
</dbReference>
<dbReference type="GO" id="GO:0005737">
    <property type="term" value="C:cytoplasm"/>
    <property type="evidence" value="ECO:0007669"/>
    <property type="project" value="UniProtKB-SubCell"/>
</dbReference>
<dbReference type="GO" id="GO:0004358">
    <property type="term" value="F:glutamate N-acetyltransferase activity"/>
    <property type="evidence" value="ECO:0007669"/>
    <property type="project" value="UniProtKB-UniRule"/>
</dbReference>
<dbReference type="GO" id="GO:0004042">
    <property type="term" value="F:L-glutamate N-acetyltransferase activity"/>
    <property type="evidence" value="ECO:0000318"/>
    <property type="project" value="GO_Central"/>
</dbReference>
<dbReference type="GO" id="GO:0006526">
    <property type="term" value="P:L-arginine biosynthetic process"/>
    <property type="evidence" value="ECO:0007669"/>
    <property type="project" value="UniProtKB-UniRule"/>
</dbReference>
<dbReference type="GO" id="GO:0006592">
    <property type="term" value="P:ornithine biosynthetic process"/>
    <property type="evidence" value="ECO:0000318"/>
    <property type="project" value="GO_Central"/>
</dbReference>
<dbReference type="CDD" id="cd02152">
    <property type="entry name" value="OAT"/>
    <property type="match status" value="1"/>
</dbReference>
<dbReference type="FunFam" id="3.10.20.340:FF:000001">
    <property type="entry name" value="Arginine biosynthesis bifunctional protein ArgJ, chloroplastic"/>
    <property type="match status" value="1"/>
</dbReference>
<dbReference type="FunFam" id="3.60.70.12:FF:000001">
    <property type="entry name" value="Arginine biosynthesis bifunctional protein ArgJ, chloroplastic"/>
    <property type="match status" value="1"/>
</dbReference>
<dbReference type="Gene3D" id="3.10.20.340">
    <property type="entry name" value="ArgJ beta chain, C-terminal domain"/>
    <property type="match status" value="1"/>
</dbReference>
<dbReference type="Gene3D" id="3.60.70.12">
    <property type="entry name" value="L-amino peptidase D-ALA esterase/amidase"/>
    <property type="match status" value="1"/>
</dbReference>
<dbReference type="HAMAP" id="MF_01106">
    <property type="entry name" value="ArgJ"/>
    <property type="match status" value="1"/>
</dbReference>
<dbReference type="InterPro" id="IPR002813">
    <property type="entry name" value="Arg_biosynth_ArgJ"/>
</dbReference>
<dbReference type="InterPro" id="IPR016117">
    <property type="entry name" value="ArgJ-like_dom_sf"/>
</dbReference>
<dbReference type="InterPro" id="IPR042195">
    <property type="entry name" value="ArgJ_beta_C"/>
</dbReference>
<dbReference type="NCBIfam" id="TIGR00120">
    <property type="entry name" value="ArgJ"/>
    <property type="match status" value="1"/>
</dbReference>
<dbReference type="NCBIfam" id="NF003802">
    <property type="entry name" value="PRK05388.1"/>
    <property type="match status" value="1"/>
</dbReference>
<dbReference type="PANTHER" id="PTHR23100">
    <property type="entry name" value="ARGININE BIOSYNTHESIS BIFUNCTIONAL PROTEIN ARGJ"/>
    <property type="match status" value="1"/>
</dbReference>
<dbReference type="PANTHER" id="PTHR23100:SF0">
    <property type="entry name" value="ARGININE BIOSYNTHESIS BIFUNCTIONAL PROTEIN ARGJ, MITOCHONDRIAL"/>
    <property type="match status" value="1"/>
</dbReference>
<dbReference type="Pfam" id="PF01960">
    <property type="entry name" value="ArgJ"/>
    <property type="match status" value="1"/>
</dbReference>
<dbReference type="SUPFAM" id="SSF56266">
    <property type="entry name" value="DmpA/ArgJ-like"/>
    <property type="match status" value="1"/>
</dbReference>
<reference key="1">
    <citation type="journal article" date="2003" name="Science">
        <title>Genome of Geobacter sulfurreducens: metal reduction in subsurface environments.</title>
        <authorList>
            <person name="Methe B.A."/>
            <person name="Nelson K.E."/>
            <person name="Eisen J.A."/>
            <person name="Paulsen I.T."/>
            <person name="Nelson W.C."/>
            <person name="Heidelberg J.F."/>
            <person name="Wu D."/>
            <person name="Wu M."/>
            <person name="Ward N.L."/>
            <person name="Beanan M.J."/>
            <person name="Dodson R.J."/>
            <person name="Madupu R."/>
            <person name="Brinkac L.M."/>
            <person name="Daugherty S.C."/>
            <person name="DeBoy R.T."/>
            <person name="Durkin A.S."/>
            <person name="Gwinn M.L."/>
            <person name="Kolonay J.F."/>
            <person name="Sullivan S.A."/>
            <person name="Haft D.H."/>
            <person name="Selengut J."/>
            <person name="Davidsen T.M."/>
            <person name="Zafar N."/>
            <person name="White O."/>
            <person name="Tran B."/>
            <person name="Romero C."/>
            <person name="Forberger H.A."/>
            <person name="Weidman J.F."/>
            <person name="Khouri H.M."/>
            <person name="Feldblyum T.V."/>
            <person name="Utterback T.R."/>
            <person name="Van Aken S.E."/>
            <person name="Lovley D.R."/>
            <person name="Fraser C.M."/>
        </authorList>
    </citation>
    <scope>NUCLEOTIDE SEQUENCE [LARGE SCALE GENOMIC DNA]</scope>
    <source>
        <strain>ATCC 51573 / DSM 12127 / PCA</strain>
    </source>
</reference>
<name>ARGJ_GEOSL</name>
<protein>
    <recommendedName>
        <fullName evidence="1">Arginine biosynthesis bifunctional protein ArgJ</fullName>
    </recommendedName>
    <domain>
        <recommendedName>
            <fullName evidence="1">Glutamate N-acetyltransferase</fullName>
            <ecNumber evidence="1">2.3.1.35</ecNumber>
        </recommendedName>
        <alternativeName>
            <fullName evidence="1">Ornithine acetyltransferase</fullName>
            <shortName evidence="1">OATase</shortName>
        </alternativeName>
        <alternativeName>
            <fullName evidence="1">Ornithine transacetylase</fullName>
        </alternativeName>
    </domain>
    <domain>
        <recommendedName>
            <fullName evidence="1">Amino-acid acetyltransferase</fullName>
            <ecNumber evidence="1">2.3.1.1</ecNumber>
        </recommendedName>
        <alternativeName>
            <fullName evidence="1">N-acetylglutamate synthase</fullName>
            <shortName evidence="1">AGSase</shortName>
        </alternativeName>
    </domain>
    <component>
        <recommendedName>
            <fullName evidence="1">Arginine biosynthesis bifunctional protein ArgJ alpha chain</fullName>
        </recommendedName>
    </component>
    <component>
        <recommendedName>
            <fullName evidence="1">Arginine biosynthesis bifunctional protein ArgJ beta chain</fullName>
        </recommendedName>
    </component>
</protein>
<evidence type="ECO:0000255" key="1">
    <source>
        <dbReference type="HAMAP-Rule" id="MF_01106"/>
    </source>
</evidence>
<organism>
    <name type="scientific">Geobacter sulfurreducens (strain ATCC 51573 / DSM 12127 / PCA)</name>
    <dbReference type="NCBI Taxonomy" id="243231"/>
    <lineage>
        <taxon>Bacteria</taxon>
        <taxon>Pseudomonadati</taxon>
        <taxon>Thermodesulfobacteriota</taxon>
        <taxon>Desulfuromonadia</taxon>
        <taxon>Geobacterales</taxon>
        <taxon>Geobacteraceae</taxon>
        <taxon>Geobacter</taxon>
    </lineage>
</organism>